<protein>
    <recommendedName>
        <fullName evidence="1">GTP-dependent dephospho-CoA kinase</fullName>
        <ecNumber evidence="1">2.7.1.237</ecNumber>
    </recommendedName>
    <alternativeName>
        <fullName evidence="1">Dephospho-coenzyme A kinase</fullName>
        <shortName evidence="1">DPCK</shortName>
    </alternativeName>
</protein>
<reference key="1">
    <citation type="journal article" date="1999" name="Genetics">
        <title>Divergence of the hyperthermophilic archaea Pyrococcus furiosus and P. horikoshii inferred from complete genomic sequences.</title>
        <authorList>
            <person name="Maeder D.L."/>
            <person name="Weiss R.B."/>
            <person name="Dunn D.M."/>
            <person name="Cherry J.L."/>
            <person name="Gonzalez J.M."/>
            <person name="DiRuggiero J."/>
            <person name="Robb F.T."/>
        </authorList>
    </citation>
    <scope>NUCLEOTIDE SEQUENCE [LARGE SCALE GENOMIC DNA]</scope>
    <source>
        <strain>ATCC 43587 / DSM 3638 / JCM 8422 / Vc1</strain>
    </source>
</reference>
<sequence>MSVMFKLPLNLRQELKKPLGELIKGEIPIPYLKLKEIVNSNTLITVGDVVTENSLKVGLRPRLAIYDHKTERREYKPEIGDKGVLLTVKNPPGTITLHLLKTIKKAYSLIRRGTNVHIVVNGEEDLAAIPAVLYAPLGSFVVYGQPREGIVLIKVTSECKRRCAEIMRNMEVVRNGD</sequence>
<dbReference type="EC" id="2.7.1.237" evidence="1"/>
<dbReference type="EMBL" id="AE009950">
    <property type="protein sequence ID" value="AAL80378.1"/>
    <property type="molecule type" value="Genomic_DNA"/>
</dbReference>
<dbReference type="RefSeq" id="WP_011011369.1">
    <property type="nucleotide sequence ID" value="NZ_CP023154.1"/>
</dbReference>
<dbReference type="SMR" id="Q8U441"/>
<dbReference type="STRING" id="186497.PF0254"/>
<dbReference type="PaxDb" id="186497-PF0254"/>
<dbReference type="KEGG" id="pfu:PF0254"/>
<dbReference type="PATRIC" id="fig|186497.12.peg.266"/>
<dbReference type="eggNOG" id="arCOG04076">
    <property type="taxonomic scope" value="Archaea"/>
</dbReference>
<dbReference type="HOGENOM" id="CLU_120795_1_0_2"/>
<dbReference type="OrthoDB" id="15447at2157"/>
<dbReference type="PhylomeDB" id="Q8U441"/>
<dbReference type="UniPathway" id="UPA00241"/>
<dbReference type="Proteomes" id="UP000001013">
    <property type="component" value="Chromosome"/>
</dbReference>
<dbReference type="GO" id="GO:0005525">
    <property type="term" value="F:GTP binding"/>
    <property type="evidence" value="ECO:0007669"/>
    <property type="project" value="UniProtKB-UniRule"/>
</dbReference>
<dbReference type="GO" id="GO:0016301">
    <property type="term" value="F:kinase activity"/>
    <property type="evidence" value="ECO:0007669"/>
    <property type="project" value="UniProtKB-UniRule"/>
</dbReference>
<dbReference type="GO" id="GO:0015937">
    <property type="term" value="P:coenzyme A biosynthetic process"/>
    <property type="evidence" value="ECO:0007669"/>
    <property type="project" value="UniProtKB-UniRule"/>
</dbReference>
<dbReference type="HAMAP" id="MF_00590">
    <property type="entry name" value="Dephospho_CoA_kinase_GTP_dep"/>
    <property type="match status" value="1"/>
</dbReference>
<dbReference type="InterPro" id="IPR054930">
    <property type="entry name" value="deph_CoA_kin_Thcocales"/>
</dbReference>
<dbReference type="InterPro" id="IPR007164">
    <property type="entry name" value="GTP-dep_dephospho-CoA_kin"/>
</dbReference>
<dbReference type="NCBIfam" id="NF041125">
    <property type="entry name" value="deph_CoA_kin_Thcocales"/>
    <property type="match status" value="1"/>
</dbReference>
<dbReference type="NCBIfam" id="NF002246">
    <property type="entry name" value="PRK01160.1-1"/>
    <property type="match status" value="1"/>
</dbReference>
<dbReference type="PANTHER" id="PTHR40732:SF1">
    <property type="entry name" value="GTP-DEPENDENT DEPHOSPHO-COA KINASE"/>
    <property type="match status" value="1"/>
</dbReference>
<dbReference type="PANTHER" id="PTHR40732">
    <property type="entry name" value="UPF0218 PROTEIN TK1697"/>
    <property type="match status" value="1"/>
</dbReference>
<dbReference type="Pfam" id="PF04019">
    <property type="entry name" value="DUF359"/>
    <property type="match status" value="1"/>
</dbReference>
<dbReference type="PIRSF" id="PIRSF006533">
    <property type="entry name" value="UCP006533"/>
    <property type="match status" value="1"/>
</dbReference>
<name>DPCKG_PYRFU</name>
<accession>Q8U441</accession>
<organism>
    <name type="scientific">Pyrococcus furiosus (strain ATCC 43587 / DSM 3638 / JCM 8422 / Vc1)</name>
    <dbReference type="NCBI Taxonomy" id="186497"/>
    <lineage>
        <taxon>Archaea</taxon>
        <taxon>Methanobacteriati</taxon>
        <taxon>Methanobacteriota</taxon>
        <taxon>Thermococci</taxon>
        <taxon>Thermococcales</taxon>
        <taxon>Thermococcaceae</taxon>
        <taxon>Pyrococcus</taxon>
    </lineage>
</organism>
<proteinExistence type="inferred from homology"/>
<gene>
    <name type="ordered locus">PF0254</name>
</gene>
<feature type="chain" id="PRO_0000137615" description="GTP-dependent dephospho-CoA kinase">
    <location>
        <begin position="1"/>
        <end position="177"/>
    </location>
</feature>
<feature type="binding site" evidence="1">
    <location>
        <position position="48"/>
    </location>
    <ligand>
        <name>GTP</name>
        <dbReference type="ChEBI" id="CHEBI:37565"/>
    </ligand>
</feature>
<feature type="binding site" evidence="1">
    <location>
        <position position="49"/>
    </location>
    <ligand>
        <name>GTP</name>
        <dbReference type="ChEBI" id="CHEBI:37565"/>
    </ligand>
</feature>
<feature type="binding site" evidence="1">
    <location>
        <position position="50"/>
    </location>
    <ligand>
        <name>GTP</name>
        <dbReference type="ChEBI" id="CHEBI:37565"/>
    </ligand>
</feature>
<feature type="binding site" evidence="1">
    <location>
        <position position="67"/>
    </location>
    <ligand>
        <name>GTP</name>
        <dbReference type="ChEBI" id="CHEBI:37565"/>
    </ligand>
</feature>
<feature type="binding site" evidence="1">
    <location>
        <position position="69"/>
    </location>
    <ligand>
        <name>GTP</name>
        <dbReference type="ChEBI" id="CHEBI:37565"/>
    </ligand>
</feature>
<feature type="binding site" evidence="1">
    <location>
        <position position="124"/>
    </location>
    <ligand>
        <name>GTP</name>
        <dbReference type="ChEBI" id="CHEBI:37565"/>
    </ligand>
</feature>
<keyword id="KW-0173">Coenzyme A biosynthesis</keyword>
<keyword id="KW-0342">GTP-binding</keyword>
<keyword id="KW-0418">Kinase</keyword>
<keyword id="KW-0547">Nucleotide-binding</keyword>
<keyword id="KW-1185">Reference proteome</keyword>
<keyword id="KW-0808">Transferase</keyword>
<comment type="function">
    <text evidence="1">Catalyzes the GTP-dependent phosphorylation of the 3'-hydroxyl group of dephosphocoenzyme A to form coenzyme A (CoA).</text>
</comment>
<comment type="catalytic activity">
    <reaction evidence="1">
        <text>3'-dephospho-CoA + GTP = GDP + CoA + H(+)</text>
        <dbReference type="Rhea" id="RHEA:61156"/>
        <dbReference type="ChEBI" id="CHEBI:15378"/>
        <dbReference type="ChEBI" id="CHEBI:37565"/>
        <dbReference type="ChEBI" id="CHEBI:57287"/>
        <dbReference type="ChEBI" id="CHEBI:57328"/>
        <dbReference type="ChEBI" id="CHEBI:58189"/>
        <dbReference type="EC" id="2.7.1.237"/>
    </reaction>
</comment>
<comment type="pathway">
    <text evidence="1">Cofactor biosynthesis; coenzyme A biosynthesis.</text>
</comment>
<comment type="similarity">
    <text evidence="1">Belongs to the GTP-dependent DPCK family.</text>
</comment>
<evidence type="ECO:0000255" key="1">
    <source>
        <dbReference type="HAMAP-Rule" id="MF_00590"/>
    </source>
</evidence>